<organism>
    <name type="scientific">Bacillus thuringiensis (strain Al Hakam)</name>
    <dbReference type="NCBI Taxonomy" id="412694"/>
    <lineage>
        <taxon>Bacteria</taxon>
        <taxon>Bacillati</taxon>
        <taxon>Bacillota</taxon>
        <taxon>Bacilli</taxon>
        <taxon>Bacillales</taxon>
        <taxon>Bacillaceae</taxon>
        <taxon>Bacillus</taxon>
        <taxon>Bacillus cereus group</taxon>
    </lineage>
</organism>
<proteinExistence type="inferred from homology"/>
<sequence>MDFKQYSPEELKECSMIEVVHSVLGDKRQATTFNELVQEIAQVLGLSQEQVNAKIAQFYTDLNIDGRFINLGENRWGLRSWYPYEQIDEEILPQPKPKKKRKVEDDGFDDYIEEDEDFDDADVTEDEDDDVEDLDKVLEDEDGDDDDLDDLDEDEDDFAEEELEYDETEEEEEEEL</sequence>
<comment type="function">
    <text evidence="1">Participates in both the initiation and recycling phases of transcription. In the presence of the delta subunit, RNAP displays an increased specificity of transcription, a decreased affinity for nucleic acids, and an increased efficiency of RNA synthesis because of enhanced recycling.</text>
</comment>
<comment type="subunit">
    <text evidence="1">RNAP is composed of a core of 2 alpha, a beta and a beta' subunits. The core is associated with a delta subunit and one of several sigma factors.</text>
</comment>
<comment type="similarity">
    <text evidence="1">Belongs to the RpoE family.</text>
</comment>
<dbReference type="EMBL" id="CP000485">
    <property type="protein sequence ID" value="ABK88017.1"/>
    <property type="molecule type" value="Genomic_DNA"/>
</dbReference>
<dbReference type="RefSeq" id="WP_000346287.1">
    <property type="nucleotide sequence ID" value="NC_008600.1"/>
</dbReference>
<dbReference type="SMR" id="A0RLC4"/>
<dbReference type="KEGG" id="btl:BALH_4837"/>
<dbReference type="HOGENOM" id="CLU_116648_1_0_9"/>
<dbReference type="GO" id="GO:0000428">
    <property type="term" value="C:DNA-directed RNA polymerase complex"/>
    <property type="evidence" value="ECO:0007669"/>
    <property type="project" value="UniProtKB-KW"/>
</dbReference>
<dbReference type="GO" id="GO:0003899">
    <property type="term" value="F:DNA-directed RNA polymerase activity"/>
    <property type="evidence" value="ECO:0007669"/>
    <property type="project" value="UniProtKB-UniRule"/>
</dbReference>
<dbReference type="GO" id="GO:0006351">
    <property type="term" value="P:DNA-templated transcription"/>
    <property type="evidence" value="ECO:0007669"/>
    <property type="project" value="InterPro"/>
</dbReference>
<dbReference type="GO" id="GO:0006355">
    <property type="term" value="P:regulation of DNA-templated transcription"/>
    <property type="evidence" value="ECO:0007669"/>
    <property type="project" value="UniProtKB-UniRule"/>
</dbReference>
<dbReference type="FunFam" id="1.10.10.1250:FF:000001">
    <property type="entry name" value="Probable DNA-directed RNA polymerase subunit delta"/>
    <property type="match status" value="1"/>
</dbReference>
<dbReference type="Gene3D" id="1.10.10.1250">
    <property type="entry name" value="RNA polymerase, subunit delta, N-terminal domain"/>
    <property type="match status" value="1"/>
</dbReference>
<dbReference type="HAMAP" id="MF_00357">
    <property type="entry name" value="RNApol_bact_RpoE"/>
    <property type="match status" value="1"/>
</dbReference>
<dbReference type="InterPro" id="IPR007759">
    <property type="entry name" value="Asxl_HARE-HTH"/>
</dbReference>
<dbReference type="InterPro" id="IPR038087">
    <property type="entry name" value="RNAP_delta_N_dom_sf"/>
</dbReference>
<dbReference type="InterPro" id="IPR029757">
    <property type="entry name" value="RpoE"/>
</dbReference>
<dbReference type="NCBIfam" id="TIGR04567">
    <property type="entry name" value="RNAP_delt_lowGC"/>
    <property type="match status" value="1"/>
</dbReference>
<dbReference type="Pfam" id="PF05066">
    <property type="entry name" value="HARE-HTH"/>
    <property type="match status" value="1"/>
</dbReference>
<dbReference type="PROSITE" id="PS51913">
    <property type="entry name" value="HTH_HARE"/>
    <property type="match status" value="1"/>
</dbReference>
<evidence type="ECO:0000255" key="1">
    <source>
        <dbReference type="HAMAP-Rule" id="MF_00357"/>
    </source>
</evidence>
<evidence type="ECO:0000255" key="2">
    <source>
        <dbReference type="PROSITE-ProRule" id="PRU01261"/>
    </source>
</evidence>
<evidence type="ECO:0000256" key="3">
    <source>
        <dbReference type="SAM" id="MobiDB-lite"/>
    </source>
</evidence>
<name>RPOE_BACAH</name>
<gene>
    <name evidence="1" type="primary">rpoE</name>
    <name type="ordered locus">BALH_4837</name>
</gene>
<protein>
    <recommendedName>
        <fullName evidence="1">Probable DNA-directed RNA polymerase subunit delta</fullName>
    </recommendedName>
    <alternativeName>
        <fullName evidence="1">RNAP delta factor</fullName>
    </alternativeName>
</protein>
<keyword id="KW-0240">DNA-directed RNA polymerase</keyword>
<keyword id="KW-0548">Nucleotidyltransferase</keyword>
<keyword id="KW-0804">Transcription</keyword>
<keyword id="KW-0808">Transferase</keyword>
<accession>A0RLC4</accession>
<feature type="chain" id="PRO_0000303123" description="Probable DNA-directed RNA polymerase subunit delta">
    <location>
        <begin position="1"/>
        <end position="176"/>
    </location>
</feature>
<feature type="domain" description="HTH HARE-type" evidence="2">
    <location>
        <begin position="14"/>
        <end position="81"/>
    </location>
</feature>
<feature type="region of interest" description="Disordered" evidence="3">
    <location>
        <begin position="91"/>
        <end position="176"/>
    </location>
</feature>
<feature type="compositionally biased region" description="Acidic residues" evidence="3">
    <location>
        <begin position="106"/>
        <end position="176"/>
    </location>
</feature>
<reference key="1">
    <citation type="journal article" date="2007" name="J. Bacteriol.">
        <title>The complete genome sequence of Bacillus thuringiensis Al Hakam.</title>
        <authorList>
            <person name="Challacombe J.F."/>
            <person name="Altherr M.R."/>
            <person name="Xie G."/>
            <person name="Bhotika S.S."/>
            <person name="Brown N."/>
            <person name="Bruce D."/>
            <person name="Campbell C.S."/>
            <person name="Campbell M.L."/>
            <person name="Chen J."/>
            <person name="Chertkov O."/>
            <person name="Cleland C."/>
            <person name="Dimitrijevic M."/>
            <person name="Doggett N.A."/>
            <person name="Fawcett J.J."/>
            <person name="Glavina T."/>
            <person name="Goodwin L.A."/>
            <person name="Green L.D."/>
            <person name="Han C.S."/>
            <person name="Hill K.K."/>
            <person name="Hitchcock P."/>
            <person name="Jackson P.J."/>
            <person name="Keim P."/>
            <person name="Kewalramani A.R."/>
            <person name="Longmire J."/>
            <person name="Lucas S."/>
            <person name="Malfatti S."/>
            <person name="Martinez D."/>
            <person name="McMurry K."/>
            <person name="Meincke L.J."/>
            <person name="Misra M."/>
            <person name="Moseman B.L."/>
            <person name="Mundt M."/>
            <person name="Munk A.C."/>
            <person name="Okinaka R.T."/>
            <person name="Parson-Quintana B."/>
            <person name="Reilly L.P."/>
            <person name="Richardson P."/>
            <person name="Robinson D.L."/>
            <person name="Saunders E."/>
            <person name="Tapia R."/>
            <person name="Tesmer J.G."/>
            <person name="Thayer N."/>
            <person name="Thompson L.S."/>
            <person name="Tice H."/>
            <person name="Ticknor L.O."/>
            <person name="Wills P.L."/>
            <person name="Gilna P."/>
            <person name="Brettin T.S."/>
        </authorList>
    </citation>
    <scope>NUCLEOTIDE SEQUENCE [LARGE SCALE GENOMIC DNA]</scope>
    <source>
        <strain>Al Hakam</strain>
    </source>
</reference>